<accession>O67838</accession>
<feature type="chain" id="PRO_0000186966" description="Uncharacterized protein aq_2054">
    <location>
        <begin position="1"/>
        <end position="1116"/>
    </location>
</feature>
<feature type="transmembrane region" description="Helical" evidence="1">
    <location>
        <begin position="3"/>
        <end position="20"/>
    </location>
</feature>
<sequence>MRFFLTFLLFLFTLFSLFVYDFLRKKNFYLDLDLDIRTRTVKELILNLERFFGLNLYLNFKDIKFEKIIKIEKGKVVVVSFKKRKKKKKFLLKNIPIREIPINLKIGHLDVWTGNEGGVNRVIVKDASLINNELEGEFLYTNLRSFTLNGSIKAKIQRDTLTLKDLLLDSEYFSAKTKGEIKRNTGEILAEVEIKEIRKENFTLSGTKINAKGTINLPVLDINAKAFVKDLIVRNKNYGSIEGIVKGNYELFDKLFLKGEAVNPEGTKIKFTYDVIPEGLLTFSFENLVVDKNTLGINREIRGEFHGNGKVDFKKMFVKVNAFTENLEVIDKKFKGDVLFSYNFSGNGSLNFEFKNSGYAKGNLIINKNKLEGEFSFNDFPVVFQDFNAYLSGEGKFKKGKIFEMEAKIFANNGQFRDFSLQRISSDVKIRDKEIEALVYYGNSFGFVKGKFDNLKGFIQLNNFSLEGKEKSIKISHGSIEFSIQGKSINSKGKLGDLALNLSNIYAKTELEFNFNKKNEKITLEGNGILNVRFKEKSVLENFKYSLLLLDNNLRIFGASKDSILRVVYYISGRSGEFYGKIDKKEFGISLNGEIKNKDVKANFEAFYALLREKIKIKGKIETKEDQVKISLFPTQLRGKRFNYRFNGLNVFLEKENLSVEFKGLDVSLLDKKLLSISPSKGVGTTKNFSFEPVKITGVLNGVLNIAYKGNLYLKSSGTLNLTLLSKHIGSLMKSQMFGKLDYEFVFDGNELKFLARNDEPVRINSLYFYEPFGSAMNLELRKDFFAFALTGWFREGFLNAYAISKNFRDFEVEFVYKNLPVKLKDGIRARIEADGKGKVVVKNFKEIFLTLDTLLDGYVKVKKLPEKKEEEKKTLPVEITLDINFKTENGLIVKLPEGRVYTALNGRIYGKLPEPYYEIDVVLKSGRLEYFGRKFFVKRSTVKLLKEKDKELTEFDFYLNTVSDGYKIFLLVHGTPENPSVYYFSEPPLSREQILFKLISGGVNEGILPVGTVLANELKALGYVKGTIERLFDVNVEIGIKTSSTGEVGALVKLKKKLGSYFSLYYQTASTKDKKDTFWGAEVRSPGSLDLGFSFNVYSDNTREYKLRYVREFDF</sequence>
<evidence type="ECO:0000255" key="1"/>
<evidence type="ECO:0000305" key="2"/>
<gene>
    <name type="ordered locus">aq_2054</name>
</gene>
<proteinExistence type="predicted"/>
<comment type="subcellular location">
    <subcellularLocation>
        <location evidence="2">Membrane</location>
        <topology evidence="2">Single-pass membrane protein</topology>
    </subcellularLocation>
</comment>
<organism>
    <name type="scientific">Aquifex aeolicus (strain VF5)</name>
    <dbReference type="NCBI Taxonomy" id="224324"/>
    <lineage>
        <taxon>Bacteria</taxon>
        <taxon>Pseudomonadati</taxon>
        <taxon>Aquificota</taxon>
        <taxon>Aquificia</taxon>
        <taxon>Aquificales</taxon>
        <taxon>Aquificaceae</taxon>
        <taxon>Aquifex</taxon>
    </lineage>
</organism>
<keyword id="KW-0472">Membrane</keyword>
<keyword id="KW-1185">Reference proteome</keyword>
<keyword id="KW-0812">Transmembrane</keyword>
<keyword id="KW-1133">Transmembrane helix</keyword>
<protein>
    <recommendedName>
        <fullName>Uncharacterized protein aq_2054</fullName>
    </recommendedName>
</protein>
<reference key="1">
    <citation type="journal article" date="1998" name="Nature">
        <title>The complete genome of the hyperthermophilic bacterium Aquifex aeolicus.</title>
        <authorList>
            <person name="Deckert G."/>
            <person name="Warren P.V."/>
            <person name="Gaasterland T."/>
            <person name="Young W.G."/>
            <person name="Lenox A.L."/>
            <person name="Graham D.E."/>
            <person name="Overbeek R."/>
            <person name="Snead M.A."/>
            <person name="Keller M."/>
            <person name="Aujay M."/>
            <person name="Huber R."/>
            <person name="Feldman R.A."/>
            <person name="Short J.M."/>
            <person name="Olsen G.J."/>
            <person name="Swanson R.V."/>
        </authorList>
    </citation>
    <scope>NUCLEOTIDE SEQUENCE [LARGE SCALE GENOMIC DNA]</scope>
    <source>
        <strain>VF5</strain>
    </source>
</reference>
<name>Y2054_AQUAE</name>
<dbReference type="EMBL" id="AE000657">
    <property type="protein sequence ID" value="AAC07805.1"/>
    <property type="molecule type" value="Genomic_DNA"/>
</dbReference>
<dbReference type="PIR" id="B70476">
    <property type="entry name" value="B70476"/>
</dbReference>
<dbReference type="RefSeq" id="NP_214407.1">
    <property type="nucleotide sequence ID" value="NC_000918.1"/>
</dbReference>
<dbReference type="RefSeq" id="WP_010881343.1">
    <property type="nucleotide sequence ID" value="NC_000918.1"/>
</dbReference>
<dbReference type="STRING" id="224324.aq_2054"/>
<dbReference type="EnsemblBacteria" id="AAC07805">
    <property type="protein sequence ID" value="AAC07805"/>
    <property type="gene ID" value="aq_2054"/>
</dbReference>
<dbReference type="KEGG" id="aae:aq_2054"/>
<dbReference type="PATRIC" id="fig|224324.8.peg.1584"/>
<dbReference type="eggNOG" id="COG2911">
    <property type="taxonomic scope" value="Bacteria"/>
</dbReference>
<dbReference type="HOGENOM" id="CLU_279118_0_0_0"/>
<dbReference type="InParanoid" id="O67838"/>
<dbReference type="OrthoDB" id="8604at2"/>
<dbReference type="Proteomes" id="UP000000798">
    <property type="component" value="Chromosome"/>
</dbReference>
<dbReference type="GO" id="GO:0005886">
    <property type="term" value="C:plasma membrane"/>
    <property type="evidence" value="ECO:0007669"/>
    <property type="project" value="InterPro"/>
</dbReference>
<dbReference type="GO" id="GO:0009306">
    <property type="term" value="P:protein secretion"/>
    <property type="evidence" value="ECO:0007669"/>
    <property type="project" value="InterPro"/>
</dbReference>
<dbReference type="InterPro" id="IPR007452">
    <property type="entry name" value="TamB"/>
</dbReference>
<dbReference type="Pfam" id="PF04357">
    <property type="entry name" value="TamB"/>
    <property type="match status" value="1"/>
</dbReference>